<reference key="1">
    <citation type="journal article" date="2004" name="Proc. Natl. Acad. Sci. U.S.A.">
        <title>Complete genomes of two clinical Staphylococcus aureus strains: evidence for the rapid evolution of virulence and drug resistance.</title>
        <authorList>
            <person name="Holden M.T.G."/>
            <person name="Feil E.J."/>
            <person name="Lindsay J.A."/>
            <person name="Peacock S.J."/>
            <person name="Day N.P.J."/>
            <person name="Enright M.C."/>
            <person name="Foster T.J."/>
            <person name="Moore C.E."/>
            <person name="Hurst L."/>
            <person name="Atkin R."/>
            <person name="Barron A."/>
            <person name="Bason N."/>
            <person name="Bentley S.D."/>
            <person name="Chillingworth C."/>
            <person name="Chillingworth T."/>
            <person name="Churcher C."/>
            <person name="Clark L."/>
            <person name="Corton C."/>
            <person name="Cronin A."/>
            <person name="Doggett J."/>
            <person name="Dowd L."/>
            <person name="Feltwell T."/>
            <person name="Hance Z."/>
            <person name="Harris B."/>
            <person name="Hauser H."/>
            <person name="Holroyd S."/>
            <person name="Jagels K."/>
            <person name="James K.D."/>
            <person name="Lennard N."/>
            <person name="Line A."/>
            <person name="Mayes R."/>
            <person name="Moule S."/>
            <person name="Mungall K."/>
            <person name="Ormond D."/>
            <person name="Quail M.A."/>
            <person name="Rabbinowitsch E."/>
            <person name="Rutherford K.M."/>
            <person name="Sanders M."/>
            <person name="Sharp S."/>
            <person name="Simmonds M."/>
            <person name="Stevens K."/>
            <person name="Whitehead S."/>
            <person name="Barrell B.G."/>
            <person name="Spratt B.G."/>
            <person name="Parkhill J."/>
        </authorList>
    </citation>
    <scope>NUCLEOTIDE SEQUENCE [LARGE SCALE GENOMIC DNA]</scope>
    <source>
        <strain>MRSA252</strain>
    </source>
</reference>
<dbReference type="EC" id="2.1.2.11" evidence="1"/>
<dbReference type="EMBL" id="BX571856">
    <property type="protein sequence ID" value="CAG41654.1"/>
    <property type="molecule type" value="Genomic_DNA"/>
</dbReference>
<dbReference type="RefSeq" id="WP_000860045.1">
    <property type="nucleotide sequence ID" value="NC_002952.2"/>
</dbReference>
<dbReference type="SMR" id="Q6GDK4"/>
<dbReference type="KEGG" id="sar:SAR2677"/>
<dbReference type="HOGENOM" id="CLU_036645_1_0_9"/>
<dbReference type="UniPathway" id="UPA00028">
    <property type="reaction ID" value="UER00003"/>
</dbReference>
<dbReference type="Proteomes" id="UP000000596">
    <property type="component" value="Chromosome"/>
</dbReference>
<dbReference type="GO" id="GO:0005737">
    <property type="term" value="C:cytoplasm"/>
    <property type="evidence" value="ECO:0007669"/>
    <property type="project" value="UniProtKB-SubCell"/>
</dbReference>
<dbReference type="GO" id="GO:0003864">
    <property type="term" value="F:3-methyl-2-oxobutanoate hydroxymethyltransferase activity"/>
    <property type="evidence" value="ECO:0007669"/>
    <property type="project" value="UniProtKB-UniRule"/>
</dbReference>
<dbReference type="GO" id="GO:0000287">
    <property type="term" value="F:magnesium ion binding"/>
    <property type="evidence" value="ECO:0007669"/>
    <property type="project" value="TreeGrafter"/>
</dbReference>
<dbReference type="GO" id="GO:0015940">
    <property type="term" value="P:pantothenate biosynthetic process"/>
    <property type="evidence" value="ECO:0007669"/>
    <property type="project" value="UniProtKB-UniRule"/>
</dbReference>
<dbReference type="CDD" id="cd06557">
    <property type="entry name" value="KPHMT-like"/>
    <property type="match status" value="1"/>
</dbReference>
<dbReference type="FunFam" id="3.20.20.60:FF:000030">
    <property type="entry name" value="3-methyl-2-oxobutanoate hydroxymethyltransferase"/>
    <property type="match status" value="1"/>
</dbReference>
<dbReference type="Gene3D" id="3.20.20.60">
    <property type="entry name" value="Phosphoenolpyruvate-binding domains"/>
    <property type="match status" value="1"/>
</dbReference>
<dbReference type="HAMAP" id="MF_00156">
    <property type="entry name" value="PanB"/>
    <property type="match status" value="1"/>
</dbReference>
<dbReference type="InterPro" id="IPR003700">
    <property type="entry name" value="Pantoate_hydroxy_MeTrfase"/>
</dbReference>
<dbReference type="InterPro" id="IPR015813">
    <property type="entry name" value="Pyrv/PenolPyrv_kinase-like_dom"/>
</dbReference>
<dbReference type="InterPro" id="IPR040442">
    <property type="entry name" value="Pyrv_kinase-like_dom_sf"/>
</dbReference>
<dbReference type="NCBIfam" id="TIGR00222">
    <property type="entry name" value="panB"/>
    <property type="match status" value="1"/>
</dbReference>
<dbReference type="NCBIfam" id="NF001452">
    <property type="entry name" value="PRK00311.1"/>
    <property type="match status" value="1"/>
</dbReference>
<dbReference type="PANTHER" id="PTHR20881">
    <property type="entry name" value="3-METHYL-2-OXOBUTANOATE HYDROXYMETHYLTRANSFERASE"/>
    <property type="match status" value="1"/>
</dbReference>
<dbReference type="PANTHER" id="PTHR20881:SF0">
    <property type="entry name" value="3-METHYL-2-OXOBUTANOATE HYDROXYMETHYLTRANSFERASE"/>
    <property type="match status" value="1"/>
</dbReference>
<dbReference type="Pfam" id="PF02548">
    <property type="entry name" value="Pantoate_transf"/>
    <property type="match status" value="1"/>
</dbReference>
<dbReference type="PIRSF" id="PIRSF000388">
    <property type="entry name" value="Pantoate_hydroxy_MeTrfase"/>
    <property type="match status" value="1"/>
</dbReference>
<dbReference type="SUPFAM" id="SSF51621">
    <property type="entry name" value="Phosphoenolpyruvate/pyruvate domain"/>
    <property type="match status" value="1"/>
</dbReference>
<proteinExistence type="inferred from homology"/>
<keyword id="KW-0963">Cytoplasm</keyword>
<keyword id="KW-0460">Magnesium</keyword>
<keyword id="KW-0479">Metal-binding</keyword>
<keyword id="KW-0566">Pantothenate biosynthesis</keyword>
<keyword id="KW-0808">Transferase</keyword>
<gene>
    <name evidence="1" type="primary">panB</name>
    <name type="ordered locus">SAR2677</name>
</gene>
<name>PANB_STAAR</name>
<sequence>MKTVSQLIDMKQKQTKISMVTAYDFPSAKQVEAAGIDMILVGDSLGMTVLGYESTVQVTLADMIHHGRAVRRGAPNTFVVVDMPIGAVGISMTQDLNHALKLYQETNANAIKAEGAHITPFIEKATAIGIPVVAHLGLTPQSVGVMGYKLQGATKEAAEQLILDAKNVEKAGAVALVLEAIPNDLAEEISKHLTIPVIGIGAGKGTDGQVLVYHDMLNYGIEHKAKFVKQFADFSVGVDGLKQYDQEVKSGAFPSEEYTYKKKIMNEVNNND</sequence>
<comment type="function">
    <text evidence="1">Catalyzes the reversible reaction in which hydroxymethyl group from 5,10-methylenetetrahydrofolate is transferred onto alpha-ketoisovalerate to form ketopantoate.</text>
</comment>
<comment type="catalytic activity">
    <reaction evidence="1">
        <text>3-methyl-2-oxobutanoate + (6R)-5,10-methylene-5,6,7,8-tetrahydrofolate + H2O = 2-dehydropantoate + (6S)-5,6,7,8-tetrahydrofolate</text>
        <dbReference type="Rhea" id="RHEA:11824"/>
        <dbReference type="ChEBI" id="CHEBI:11561"/>
        <dbReference type="ChEBI" id="CHEBI:11851"/>
        <dbReference type="ChEBI" id="CHEBI:15377"/>
        <dbReference type="ChEBI" id="CHEBI:15636"/>
        <dbReference type="ChEBI" id="CHEBI:57453"/>
        <dbReference type="EC" id="2.1.2.11"/>
    </reaction>
</comment>
<comment type="cofactor">
    <cofactor evidence="1">
        <name>Mg(2+)</name>
        <dbReference type="ChEBI" id="CHEBI:18420"/>
    </cofactor>
    <text evidence="1">Binds 1 Mg(2+) ion per subunit.</text>
</comment>
<comment type="pathway">
    <text evidence="1">Cofactor biosynthesis; (R)-pantothenate biosynthesis; (R)-pantoate from 3-methyl-2-oxobutanoate: step 1/2.</text>
</comment>
<comment type="subunit">
    <text evidence="1">Homodecamer; pentamer of dimers.</text>
</comment>
<comment type="subcellular location">
    <subcellularLocation>
        <location evidence="1">Cytoplasm</location>
    </subcellularLocation>
</comment>
<comment type="similarity">
    <text evidence="1">Belongs to the PanB family.</text>
</comment>
<accession>Q6GDK4</accession>
<protein>
    <recommendedName>
        <fullName evidence="1">3-methyl-2-oxobutanoate hydroxymethyltransferase</fullName>
        <ecNumber evidence="1">2.1.2.11</ecNumber>
    </recommendedName>
    <alternativeName>
        <fullName evidence="1">Ketopantoate hydroxymethyltransferase</fullName>
        <shortName evidence="1">KPHMT</shortName>
    </alternativeName>
</protein>
<organism>
    <name type="scientific">Staphylococcus aureus (strain MRSA252)</name>
    <dbReference type="NCBI Taxonomy" id="282458"/>
    <lineage>
        <taxon>Bacteria</taxon>
        <taxon>Bacillati</taxon>
        <taxon>Bacillota</taxon>
        <taxon>Bacilli</taxon>
        <taxon>Bacillales</taxon>
        <taxon>Staphylococcaceae</taxon>
        <taxon>Staphylococcus</taxon>
    </lineage>
</organism>
<evidence type="ECO:0000255" key="1">
    <source>
        <dbReference type="HAMAP-Rule" id="MF_00156"/>
    </source>
</evidence>
<feature type="chain" id="PRO_0000184891" description="3-methyl-2-oxobutanoate hydroxymethyltransferase">
    <location>
        <begin position="1"/>
        <end position="272"/>
    </location>
</feature>
<feature type="active site" description="Proton acceptor" evidence="1">
    <location>
        <position position="179"/>
    </location>
</feature>
<feature type="binding site" evidence="1">
    <location>
        <begin position="43"/>
        <end position="44"/>
    </location>
    <ligand>
        <name>3-methyl-2-oxobutanoate</name>
        <dbReference type="ChEBI" id="CHEBI:11851"/>
    </ligand>
</feature>
<feature type="binding site" evidence="1">
    <location>
        <position position="43"/>
    </location>
    <ligand>
        <name>Mg(2+)</name>
        <dbReference type="ChEBI" id="CHEBI:18420"/>
    </ligand>
</feature>
<feature type="binding site" evidence="1">
    <location>
        <position position="82"/>
    </location>
    <ligand>
        <name>3-methyl-2-oxobutanoate</name>
        <dbReference type="ChEBI" id="CHEBI:11851"/>
    </ligand>
</feature>
<feature type="binding site" evidence="1">
    <location>
        <position position="82"/>
    </location>
    <ligand>
        <name>Mg(2+)</name>
        <dbReference type="ChEBI" id="CHEBI:18420"/>
    </ligand>
</feature>
<feature type="binding site" evidence="1">
    <location>
        <position position="112"/>
    </location>
    <ligand>
        <name>3-methyl-2-oxobutanoate</name>
        <dbReference type="ChEBI" id="CHEBI:11851"/>
    </ligand>
</feature>
<feature type="binding site" evidence="1">
    <location>
        <position position="114"/>
    </location>
    <ligand>
        <name>Mg(2+)</name>
        <dbReference type="ChEBI" id="CHEBI:18420"/>
    </ligand>
</feature>